<comment type="function">
    <text evidence="1">Component of the spindle pole body (SPB) required for insertion of the nascent SPB into the nuclear envelope and for the proper execution of spindle pole body (SPB) duplication. Connects the central plaque of the SPB with the half-bridge. Required for proper localization of CDC5 at the SPB and for proper M-phase progression (By similarity).</text>
</comment>
<comment type="subunit">
    <text evidence="1">Homodimer.</text>
</comment>
<comment type="subcellular location">
    <subcellularLocation>
        <location evidence="1">Cytoplasm</location>
        <location evidence="1">Cytoskeleton</location>
        <location evidence="1">Microtubule organizing center</location>
        <location evidence="1">Spindle pole body</location>
    </subcellularLocation>
    <text evidence="1">Associates with the periphary of the central plaque.</text>
</comment>
<comment type="similarity">
    <text evidence="4">Belongs to the BBP1 family.</text>
</comment>
<sequence>MVDTDDGASVGGLKGVYKWTVDALFGSGVSPSAKYRGLNHGSSRQRYSQDDTNYSRYKPLSSMRSRSRSNSWSVPVPQDPSFYKRYDLLPPISSDDEDYSEEDKLQYGANSNRGSPMVKGLMNPAPVVPKQQNNGYGEFDRRSTNPLFTDPTDTFARRKTSSSLMNNYRSSTEGIGDTAFIEETRNININGRDPLIAKLFGRITSPKKMANLPGKFPSPAKATLDSNRRRKNSVLHSIGSGRVRETSTSLDDKKILSEYMDIISDLDRNNENLSALSEQVEDRNQRYEEIDTEYKKKYYDMRNELIKELKQSKKTHDNYYLLYNKYKELKEMASESNRLKSTIYNLESEILEQGVSKNREIQNLNEKILKLESRCQELEAEKLLERDKYELRIASLEAKLREQNISNGKNYFSDYSYSHRSREFSPDNYRYLNNYFSEEMSDFDADIPYKNGR</sequence>
<proteinExistence type="inferred from homology"/>
<evidence type="ECO:0000250" key="1"/>
<evidence type="ECO:0000255" key="2"/>
<evidence type="ECO:0000256" key="3">
    <source>
        <dbReference type="SAM" id="MobiDB-lite"/>
    </source>
</evidence>
<evidence type="ECO:0000305" key="4"/>
<gene>
    <name type="primary">BBP1</name>
    <name type="ordered locus">CAGL0H00594g</name>
</gene>
<reference key="1">
    <citation type="journal article" date="2004" name="Nature">
        <title>Genome evolution in yeasts.</title>
        <authorList>
            <person name="Dujon B."/>
            <person name="Sherman D."/>
            <person name="Fischer G."/>
            <person name="Durrens P."/>
            <person name="Casaregola S."/>
            <person name="Lafontaine I."/>
            <person name="de Montigny J."/>
            <person name="Marck C."/>
            <person name="Neuveglise C."/>
            <person name="Talla E."/>
            <person name="Goffard N."/>
            <person name="Frangeul L."/>
            <person name="Aigle M."/>
            <person name="Anthouard V."/>
            <person name="Babour A."/>
            <person name="Barbe V."/>
            <person name="Barnay S."/>
            <person name="Blanchin S."/>
            <person name="Beckerich J.-M."/>
            <person name="Beyne E."/>
            <person name="Bleykasten C."/>
            <person name="Boisrame A."/>
            <person name="Boyer J."/>
            <person name="Cattolico L."/>
            <person name="Confanioleri F."/>
            <person name="de Daruvar A."/>
            <person name="Despons L."/>
            <person name="Fabre E."/>
            <person name="Fairhead C."/>
            <person name="Ferry-Dumazet H."/>
            <person name="Groppi A."/>
            <person name="Hantraye F."/>
            <person name="Hennequin C."/>
            <person name="Jauniaux N."/>
            <person name="Joyet P."/>
            <person name="Kachouri R."/>
            <person name="Kerrest A."/>
            <person name="Koszul R."/>
            <person name="Lemaire M."/>
            <person name="Lesur I."/>
            <person name="Ma L."/>
            <person name="Muller H."/>
            <person name="Nicaud J.-M."/>
            <person name="Nikolski M."/>
            <person name="Oztas S."/>
            <person name="Ozier-Kalogeropoulos O."/>
            <person name="Pellenz S."/>
            <person name="Potier S."/>
            <person name="Richard G.-F."/>
            <person name="Straub M.-L."/>
            <person name="Suleau A."/>
            <person name="Swennen D."/>
            <person name="Tekaia F."/>
            <person name="Wesolowski-Louvel M."/>
            <person name="Westhof E."/>
            <person name="Wirth B."/>
            <person name="Zeniou-Meyer M."/>
            <person name="Zivanovic Y."/>
            <person name="Bolotin-Fukuhara M."/>
            <person name="Thierry A."/>
            <person name="Bouchier C."/>
            <person name="Caudron B."/>
            <person name="Scarpelli C."/>
            <person name="Gaillardin C."/>
            <person name="Weissenbach J."/>
            <person name="Wincker P."/>
            <person name="Souciet J.-L."/>
        </authorList>
    </citation>
    <scope>NUCLEOTIDE SEQUENCE [LARGE SCALE GENOMIC DNA]</scope>
    <source>
        <strain>ATCC 2001 / BCRC 20586 / JCM 3761 / NBRC 0622 / NRRL Y-65 / CBS 138</strain>
    </source>
</reference>
<protein>
    <recommendedName>
        <fullName>Spindle pole component BBP1</fullName>
    </recommendedName>
</protein>
<name>BBP1_CANGA</name>
<keyword id="KW-0175">Coiled coil</keyword>
<keyword id="KW-0963">Cytoplasm</keyword>
<keyword id="KW-0206">Cytoskeleton</keyword>
<keyword id="KW-1185">Reference proteome</keyword>
<organism>
    <name type="scientific">Candida glabrata (strain ATCC 2001 / BCRC 20586 / JCM 3761 / NBRC 0622 / NRRL Y-65 / CBS 138)</name>
    <name type="common">Yeast</name>
    <name type="synonym">Nakaseomyces glabratus</name>
    <dbReference type="NCBI Taxonomy" id="284593"/>
    <lineage>
        <taxon>Eukaryota</taxon>
        <taxon>Fungi</taxon>
        <taxon>Dikarya</taxon>
        <taxon>Ascomycota</taxon>
        <taxon>Saccharomycotina</taxon>
        <taxon>Saccharomycetes</taxon>
        <taxon>Saccharomycetales</taxon>
        <taxon>Saccharomycetaceae</taxon>
        <taxon>Nakaseomyces</taxon>
    </lineage>
</organism>
<accession>Q6FSH0</accession>
<feature type="chain" id="PRO_0000409171" description="Spindle pole component BBP1">
    <location>
        <begin position="1"/>
        <end position="453"/>
    </location>
</feature>
<feature type="region of interest" description="Disordered" evidence="3">
    <location>
        <begin position="34"/>
        <end position="76"/>
    </location>
</feature>
<feature type="region of interest" description="Disordered" evidence="3">
    <location>
        <begin position="93"/>
        <end position="116"/>
    </location>
</feature>
<feature type="region of interest" description="Disordered" evidence="3">
    <location>
        <begin position="135"/>
        <end position="161"/>
    </location>
</feature>
<feature type="coiled-coil region" evidence="2">
    <location>
        <begin position="253"/>
        <end position="407"/>
    </location>
</feature>
<feature type="compositionally biased region" description="Polar residues" evidence="3">
    <location>
        <begin position="40"/>
        <end position="55"/>
    </location>
</feature>
<feature type="compositionally biased region" description="Low complexity" evidence="3">
    <location>
        <begin position="61"/>
        <end position="73"/>
    </location>
</feature>
<dbReference type="EMBL" id="CR380954">
    <property type="protein sequence ID" value="CAG59755.1"/>
    <property type="molecule type" value="Genomic_DNA"/>
</dbReference>
<dbReference type="RefSeq" id="XP_446824.1">
    <property type="nucleotide sequence ID" value="XM_446824.1"/>
</dbReference>
<dbReference type="SMR" id="Q6FSH0"/>
<dbReference type="FunCoup" id="Q6FSH0">
    <property type="interactions" value="130"/>
</dbReference>
<dbReference type="STRING" id="284593.Q6FSH0"/>
<dbReference type="EnsemblFungi" id="CAGL0H00594g-T">
    <property type="protein sequence ID" value="CAGL0H00594g-T-p1"/>
    <property type="gene ID" value="CAGL0H00594g"/>
</dbReference>
<dbReference type="KEGG" id="cgr:2888696"/>
<dbReference type="CGD" id="CAL0131986">
    <property type="gene designation" value="CAGL0H00594g"/>
</dbReference>
<dbReference type="VEuPathDB" id="FungiDB:CAGL0H00594g"/>
<dbReference type="eggNOG" id="ENOG502RYZ2">
    <property type="taxonomic scope" value="Eukaryota"/>
</dbReference>
<dbReference type="HOGENOM" id="CLU_711875_0_0_1"/>
<dbReference type="InParanoid" id="Q6FSH0"/>
<dbReference type="OMA" id="WTMDALF"/>
<dbReference type="Proteomes" id="UP000002428">
    <property type="component" value="Chromosome H"/>
</dbReference>
<dbReference type="GO" id="GO:0005737">
    <property type="term" value="C:cytoplasm"/>
    <property type="evidence" value="ECO:0007669"/>
    <property type="project" value="UniProtKB-KW"/>
</dbReference>
<dbReference type="GO" id="GO:0005816">
    <property type="term" value="C:spindle pole body"/>
    <property type="evidence" value="ECO:0007669"/>
    <property type="project" value="UniProtKB-SubCell"/>
</dbReference>
<dbReference type="InterPro" id="IPR029330">
    <property type="entry name" value="Bbp1_C"/>
</dbReference>
<dbReference type="InterPro" id="IPR029328">
    <property type="entry name" value="Bbp1_N"/>
</dbReference>
<dbReference type="Pfam" id="PF15272">
    <property type="entry name" value="BBP1_C"/>
    <property type="match status" value="1"/>
</dbReference>
<dbReference type="Pfam" id="PF15271">
    <property type="entry name" value="BBP1_N"/>
    <property type="match status" value="1"/>
</dbReference>